<organism>
    <name type="scientific">Vibrio campbellii (strain ATCC BAA-1116)</name>
    <dbReference type="NCBI Taxonomy" id="2902295"/>
    <lineage>
        <taxon>Bacteria</taxon>
        <taxon>Pseudomonadati</taxon>
        <taxon>Pseudomonadota</taxon>
        <taxon>Gammaproteobacteria</taxon>
        <taxon>Vibrionales</taxon>
        <taxon>Vibrionaceae</taxon>
        <taxon>Vibrio</taxon>
    </lineage>
</organism>
<reference key="1">
    <citation type="submission" date="2007-08" db="EMBL/GenBank/DDBJ databases">
        <authorList>
            <consortium name="The Vibrio harveyi Genome Sequencing Project"/>
            <person name="Bassler B."/>
            <person name="Clifton S.W."/>
            <person name="Fulton L."/>
            <person name="Delehaunty K."/>
            <person name="Fronick C."/>
            <person name="Harrison M."/>
            <person name="Markivic C."/>
            <person name="Fulton R."/>
            <person name="Tin-Wollam A.-M."/>
            <person name="Shah N."/>
            <person name="Pepin K."/>
            <person name="Nash W."/>
            <person name="Thiruvilangam P."/>
            <person name="Bhonagiri V."/>
            <person name="Waters C."/>
            <person name="Tu K.C."/>
            <person name="Irgon J."/>
            <person name="Wilson R.K."/>
        </authorList>
    </citation>
    <scope>NUCLEOTIDE SEQUENCE [LARGE SCALE GENOMIC DNA]</scope>
    <source>
        <strain>ATCC BAA-1116 / BB120</strain>
    </source>
</reference>
<sequence>MKLSDEDLSRLNEFWLYCSKNQYFNVGYPESADFDYSELEKFMKFSINNCGDWREESNYKLNSFDFEKDVMRYFSQLFNIPHQESWGYISNGGTEGNLFSCYLARELFPTAYLYYSEETHYSVDKIARLLNIPSRKIPALSNGEIDYQQLVTQIERDQQGNPIIFANIGSTMRGAIDDIGRIQNDLATLGLDRKDYYIHADAALSGMILPFVDQPPPYSFQDGIDSITVSGHKMIGSPIPCGIVLAKQHMVDQISVEVDYISSRDQTISGSRNGHSALFMWTAIKSHSLSDWQSKVKLCLDMADYTVQRLQKAGIEAWRNKNSNTVVFPCPSEPIWRKHSLATSGDVAHIVTMPHLNSTAQLDALIDDVIFDLSPEYGLGHVIGQN</sequence>
<dbReference type="EC" id="4.1.1.22" evidence="1"/>
<dbReference type="EMBL" id="CP000789">
    <property type="protein sequence ID" value="ABU71065.1"/>
    <property type="molecule type" value="Genomic_DNA"/>
</dbReference>
<dbReference type="RefSeq" id="WP_012127831.1">
    <property type="nucleotide sequence ID" value="NC_022269.1"/>
</dbReference>
<dbReference type="SMR" id="A7MVI6"/>
<dbReference type="KEGG" id="vha:VIBHAR_02100"/>
<dbReference type="PATRIC" id="fig|338187.25.peg.592"/>
<dbReference type="Proteomes" id="UP000008152">
    <property type="component" value="Chromosome I"/>
</dbReference>
<dbReference type="GO" id="GO:0004398">
    <property type="term" value="F:histidine decarboxylase activity"/>
    <property type="evidence" value="ECO:0007669"/>
    <property type="project" value="UniProtKB-UniRule"/>
</dbReference>
<dbReference type="GO" id="GO:0030170">
    <property type="term" value="F:pyridoxal phosphate binding"/>
    <property type="evidence" value="ECO:0007669"/>
    <property type="project" value="InterPro"/>
</dbReference>
<dbReference type="GO" id="GO:0019752">
    <property type="term" value="P:carboxylic acid metabolic process"/>
    <property type="evidence" value="ECO:0007669"/>
    <property type="project" value="InterPro"/>
</dbReference>
<dbReference type="Gene3D" id="3.40.640.10">
    <property type="entry name" value="Type I PLP-dependent aspartate aminotransferase-like (Major domain)"/>
    <property type="match status" value="1"/>
</dbReference>
<dbReference type="HAMAP" id="MF_00609">
    <property type="entry name" value="Pyridoxal_decarbox"/>
    <property type="match status" value="1"/>
</dbReference>
<dbReference type="InterPro" id="IPR051151">
    <property type="entry name" value="Group_II_Decarboxylase"/>
</dbReference>
<dbReference type="InterPro" id="IPR023523">
    <property type="entry name" value="Hist_deCOase_bac"/>
</dbReference>
<dbReference type="InterPro" id="IPR002129">
    <property type="entry name" value="PyrdxlP-dep_de-COase"/>
</dbReference>
<dbReference type="InterPro" id="IPR015424">
    <property type="entry name" value="PyrdxlP-dep_Trfase"/>
</dbReference>
<dbReference type="InterPro" id="IPR015421">
    <property type="entry name" value="PyrdxlP-dep_Trfase_major"/>
</dbReference>
<dbReference type="InterPro" id="IPR021115">
    <property type="entry name" value="Pyridoxal-P_BS"/>
</dbReference>
<dbReference type="NCBIfam" id="NF002748">
    <property type="entry name" value="PRK02769.1"/>
    <property type="match status" value="1"/>
</dbReference>
<dbReference type="PANTHER" id="PTHR46101">
    <property type="match status" value="1"/>
</dbReference>
<dbReference type="PANTHER" id="PTHR46101:SF2">
    <property type="entry name" value="SERINE DECARBOXYLASE"/>
    <property type="match status" value="1"/>
</dbReference>
<dbReference type="Pfam" id="PF00282">
    <property type="entry name" value="Pyridoxal_deC"/>
    <property type="match status" value="1"/>
</dbReference>
<dbReference type="SUPFAM" id="SSF53383">
    <property type="entry name" value="PLP-dependent transferases"/>
    <property type="match status" value="1"/>
</dbReference>
<dbReference type="PROSITE" id="PS00392">
    <property type="entry name" value="DDC_GAD_HDC_YDC"/>
    <property type="match status" value="1"/>
</dbReference>
<gene>
    <name evidence="1" type="primary">hdc</name>
    <name type="ordered locus">VIBHAR_02100</name>
</gene>
<protein>
    <recommendedName>
        <fullName evidence="1">Histidine decarboxylase</fullName>
        <shortName evidence="1">HDC</shortName>
        <ecNumber evidence="1">4.1.1.22</ecNumber>
    </recommendedName>
</protein>
<evidence type="ECO:0000255" key="1">
    <source>
        <dbReference type="HAMAP-Rule" id="MF_00609"/>
    </source>
</evidence>
<keyword id="KW-0210">Decarboxylase</keyword>
<keyword id="KW-0456">Lyase</keyword>
<keyword id="KW-0663">Pyridoxal phosphate</keyword>
<name>DCHS_VIBC1</name>
<accession>A7MVI6</accession>
<proteinExistence type="inferred from homology"/>
<comment type="catalytic activity">
    <reaction evidence="1">
        <text>L-histidine + H(+) = histamine + CO2</text>
        <dbReference type="Rhea" id="RHEA:20840"/>
        <dbReference type="ChEBI" id="CHEBI:15378"/>
        <dbReference type="ChEBI" id="CHEBI:16526"/>
        <dbReference type="ChEBI" id="CHEBI:57595"/>
        <dbReference type="ChEBI" id="CHEBI:58432"/>
        <dbReference type="EC" id="4.1.1.22"/>
    </reaction>
</comment>
<comment type="cofactor">
    <cofactor evidence="1">
        <name>pyridoxal 5'-phosphate</name>
        <dbReference type="ChEBI" id="CHEBI:597326"/>
    </cofactor>
</comment>
<comment type="subunit">
    <text evidence="1">Homotetramer.</text>
</comment>
<comment type="similarity">
    <text evidence="1">Belongs to the group II decarboxylase family.</text>
</comment>
<feature type="chain" id="PRO_1000061290" description="Histidine decarboxylase">
    <location>
        <begin position="1"/>
        <end position="386"/>
    </location>
</feature>
<feature type="binding site" evidence="1">
    <location>
        <position position="120"/>
    </location>
    <ligand>
        <name>substrate</name>
    </ligand>
</feature>
<feature type="modified residue" description="N6-(pyridoxal phosphate)lysine" evidence="1">
    <location>
        <position position="233"/>
    </location>
</feature>